<keyword id="KW-0963">Cytoplasm</keyword>
<keyword id="KW-0328">Glycosyltransferase</keyword>
<keyword id="KW-0660">Purine salvage</keyword>
<keyword id="KW-1185">Reference proteome</keyword>
<keyword id="KW-0808">Transferase</keyword>
<organism>
    <name type="scientific">Shewanella amazonensis (strain ATCC BAA-1098 / SB2B)</name>
    <dbReference type="NCBI Taxonomy" id="326297"/>
    <lineage>
        <taxon>Bacteria</taxon>
        <taxon>Pseudomonadati</taxon>
        <taxon>Pseudomonadota</taxon>
        <taxon>Gammaproteobacteria</taxon>
        <taxon>Alteromonadales</taxon>
        <taxon>Shewanellaceae</taxon>
        <taxon>Shewanella</taxon>
    </lineage>
</organism>
<accession>A1S560</accession>
<proteinExistence type="inferred from homology"/>
<dbReference type="EC" id="2.4.2.7" evidence="1"/>
<dbReference type="EMBL" id="CP000507">
    <property type="protein sequence ID" value="ABL99516.1"/>
    <property type="molecule type" value="Genomic_DNA"/>
</dbReference>
<dbReference type="RefSeq" id="WP_011759425.1">
    <property type="nucleotide sequence ID" value="NC_008700.1"/>
</dbReference>
<dbReference type="SMR" id="A1S560"/>
<dbReference type="STRING" id="326297.Sama_1309"/>
<dbReference type="KEGG" id="saz:Sama_1309"/>
<dbReference type="eggNOG" id="COG0503">
    <property type="taxonomic scope" value="Bacteria"/>
</dbReference>
<dbReference type="HOGENOM" id="CLU_063339_3_0_6"/>
<dbReference type="OrthoDB" id="9803963at2"/>
<dbReference type="UniPathway" id="UPA00588">
    <property type="reaction ID" value="UER00646"/>
</dbReference>
<dbReference type="Proteomes" id="UP000009175">
    <property type="component" value="Chromosome"/>
</dbReference>
<dbReference type="GO" id="GO:0005829">
    <property type="term" value="C:cytosol"/>
    <property type="evidence" value="ECO:0007669"/>
    <property type="project" value="TreeGrafter"/>
</dbReference>
<dbReference type="GO" id="GO:0003999">
    <property type="term" value="F:adenine phosphoribosyltransferase activity"/>
    <property type="evidence" value="ECO:0007669"/>
    <property type="project" value="UniProtKB-UniRule"/>
</dbReference>
<dbReference type="GO" id="GO:0006168">
    <property type="term" value="P:adenine salvage"/>
    <property type="evidence" value="ECO:0007669"/>
    <property type="project" value="InterPro"/>
</dbReference>
<dbReference type="GO" id="GO:0044209">
    <property type="term" value="P:AMP salvage"/>
    <property type="evidence" value="ECO:0007669"/>
    <property type="project" value="UniProtKB-UniRule"/>
</dbReference>
<dbReference type="GO" id="GO:0006166">
    <property type="term" value="P:purine ribonucleoside salvage"/>
    <property type="evidence" value="ECO:0007669"/>
    <property type="project" value="UniProtKB-KW"/>
</dbReference>
<dbReference type="CDD" id="cd06223">
    <property type="entry name" value="PRTases_typeI"/>
    <property type="match status" value="1"/>
</dbReference>
<dbReference type="FunFam" id="3.40.50.2020:FF:000004">
    <property type="entry name" value="Adenine phosphoribosyltransferase"/>
    <property type="match status" value="1"/>
</dbReference>
<dbReference type="Gene3D" id="3.40.50.2020">
    <property type="match status" value="1"/>
</dbReference>
<dbReference type="HAMAP" id="MF_00004">
    <property type="entry name" value="Aden_phosphoribosyltr"/>
    <property type="match status" value="1"/>
</dbReference>
<dbReference type="InterPro" id="IPR005764">
    <property type="entry name" value="Ade_phspho_trans"/>
</dbReference>
<dbReference type="InterPro" id="IPR050120">
    <property type="entry name" value="Adenine_PRTase"/>
</dbReference>
<dbReference type="InterPro" id="IPR000836">
    <property type="entry name" value="PRibTrfase_dom"/>
</dbReference>
<dbReference type="InterPro" id="IPR029057">
    <property type="entry name" value="PRTase-like"/>
</dbReference>
<dbReference type="NCBIfam" id="TIGR01090">
    <property type="entry name" value="apt"/>
    <property type="match status" value="1"/>
</dbReference>
<dbReference type="NCBIfam" id="NF002632">
    <property type="entry name" value="PRK02304.1-1"/>
    <property type="match status" value="1"/>
</dbReference>
<dbReference type="NCBIfam" id="NF002633">
    <property type="entry name" value="PRK02304.1-2"/>
    <property type="match status" value="1"/>
</dbReference>
<dbReference type="NCBIfam" id="NF002634">
    <property type="entry name" value="PRK02304.1-3"/>
    <property type="match status" value="1"/>
</dbReference>
<dbReference type="NCBIfam" id="NF002636">
    <property type="entry name" value="PRK02304.1-5"/>
    <property type="match status" value="1"/>
</dbReference>
<dbReference type="PANTHER" id="PTHR11776">
    <property type="entry name" value="ADENINE PHOSPHORIBOSYLTRANSFERASE"/>
    <property type="match status" value="1"/>
</dbReference>
<dbReference type="PANTHER" id="PTHR11776:SF7">
    <property type="entry name" value="PHOSPHORIBOSYLTRANSFERASE DOMAIN-CONTAINING PROTEIN"/>
    <property type="match status" value="1"/>
</dbReference>
<dbReference type="Pfam" id="PF00156">
    <property type="entry name" value="Pribosyltran"/>
    <property type="match status" value="1"/>
</dbReference>
<dbReference type="SUPFAM" id="SSF53271">
    <property type="entry name" value="PRTase-like"/>
    <property type="match status" value="1"/>
</dbReference>
<dbReference type="PROSITE" id="PS00103">
    <property type="entry name" value="PUR_PYR_PR_TRANSFER"/>
    <property type="match status" value="1"/>
</dbReference>
<protein>
    <recommendedName>
        <fullName evidence="1">Adenine phosphoribosyltransferase</fullName>
        <shortName evidence="1">APRT</shortName>
        <ecNumber evidence="1">2.4.2.7</ecNumber>
    </recommendedName>
</protein>
<gene>
    <name evidence="1" type="primary">apt</name>
    <name type="ordered locus">Sama_1309</name>
</gene>
<comment type="function">
    <text evidence="1">Catalyzes a salvage reaction resulting in the formation of AMP, that is energically less costly than de novo synthesis.</text>
</comment>
<comment type="catalytic activity">
    <reaction evidence="1">
        <text>AMP + diphosphate = 5-phospho-alpha-D-ribose 1-diphosphate + adenine</text>
        <dbReference type="Rhea" id="RHEA:16609"/>
        <dbReference type="ChEBI" id="CHEBI:16708"/>
        <dbReference type="ChEBI" id="CHEBI:33019"/>
        <dbReference type="ChEBI" id="CHEBI:58017"/>
        <dbReference type="ChEBI" id="CHEBI:456215"/>
        <dbReference type="EC" id="2.4.2.7"/>
    </reaction>
</comment>
<comment type="pathway">
    <text evidence="1">Purine metabolism; AMP biosynthesis via salvage pathway; AMP from adenine: step 1/1.</text>
</comment>
<comment type="subunit">
    <text evidence="1">Homodimer.</text>
</comment>
<comment type="subcellular location">
    <subcellularLocation>
        <location evidence="1">Cytoplasm</location>
    </subcellularLocation>
</comment>
<comment type="similarity">
    <text evidence="1">Belongs to the purine/pyrimidine phosphoribosyltransferase family.</text>
</comment>
<feature type="chain" id="PRO_1000000337" description="Adenine phosphoribosyltransferase">
    <location>
        <begin position="1"/>
        <end position="181"/>
    </location>
</feature>
<evidence type="ECO:0000255" key="1">
    <source>
        <dbReference type="HAMAP-Rule" id="MF_00004"/>
    </source>
</evidence>
<name>APT_SHEAM</name>
<sequence>MNTDSLALIKQSIKTIPDYPKAGIMFRDVTSLLEDHTAYQTAMKLLVERYKDSGFTKVVGTESRGFLFGAPLALELGVGFVPVRKPGKLPRETISESYELEYGHDTLEIHVDAIKAGDKVLVIDDLLATGGTIEATVKLIRRLGGDVAHAAFVISLPDLGGEKRLQAMGLEICKLCEFEGD</sequence>
<reference key="1">
    <citation type="submission" date="2006-12" db="EMBL/GenBank/DDBJ databases">
        <title>Complete sequence of Shewanella amazonensis SB2B.</title>
        <authorList>
            <consortium name="US DOE Joint Genome Institute"/>
            <person name="Copeland A."/>
            <person name="Lucas S."/>
            <person name="Lapidus A."/>
            <person name="Barry K."/>
            <person name="Detter J.C."/>
            <person name="Glavina del Rio T."/>
            <person name="Hammon N."/>
            <person name="Israni S."/>
            <person name="Dalin E."/>
            <person name="Tice H."/>
            <person name="Pitluck S."/>
            <person name="Munk A.C."/>
            <person name="Brettin T."/>
            <person name="Bruce D."/>
            <person name="Han C."/>
            <person name="Tapia R."/>
            <person name="Gilna P."/>
            <person name="Schmutz J."/>
            <person name="Larimer F."/>
            <person name="Land M."/>
            <person name="Hauser L."/>
            <person name="Kyrpides N."/>
            <person name="Mikhailova N."/>
            <person name="Fredrickson J."/>
            <person name="Richardson P."/>
        </authorList>
    </citation>
    <scope>NUCLEOTIDE SEQUENCE [LARGE SCALE GENOMIC DNA]</scope>
    <source>
        <strain>ATCC BAA-1098 / SB2B</strain>
    </source>
</reference>